<dbReference type="EC" id="3.5.1.3" evidence="4"/>
<dbReference type="EMBL" id="AF284572">
    <property type="protein sequence ID" value="AAF87101.1"/>
    <property type="molecule type" value="Genomic_DNA"/>
</dbReference>
<dbReference type="EMBL" id="U19102">
    <property type="protein sequence ID" value="AAB67751.1"/>
    <property type="molecule type" value="Genomic_DNA"/>
</dbReference>
<dbReference type="EMBL" id="BK006945">
    <property type="protein sequence ID" value="DAA09655.1"/>
    <property type="molecule type" value="Genomic_DNA"/>
</dbReference>
<dbReference type="PIR" id="S51459">
    <property type="entry name" value="S51459"/>
</dbReference>
<dbReference type="RefSeq" id="NP_013455.1">
    <property type="nucleotide sequence ID" value="NM_001182240.1"/>
</dbReference>
<dbReference type="PDB" id="1F89">
    <property type="method" value="X-ray"/>
    <property type="resolution" value="2.40 A"/>
    <property type="chains" value="A/B=1-291"/>
</dbReference>
<dbReference type="PDBsum" id="1F89"/>
<dbReference type="SMR" id="P49954"/>
<dbReference type="BioGRID" id="31613">
    <property type="interactions" value="34"/>
</dbReference>
<dbReference type="DIP" id="DIP-4666N"/>
<dbReference type="FunCoup" id="P49954">
    <property type="interactions" value="818"/>
</dbReference>
<dbReference type="IntAct" id="P49954">
    <property type="interactions" value="2"/>
</dbReference>
<dbReference type="STRING" id="4932.YLR351C"/>
<dbReference type="iPTMnet" id="P49954"/>
<dbReference type="PaxDb" id="4932-YLR351C"/>
<dbReference type="PeptideAtlas" id="P49954"/>
<dbReference type="EnsemblFungi" id="YLR351C_mRNA">
    <property type="protein sequence ID" value="YLR351C"/>
    <property type="gene ID" value="YLR351C"/>
</dbReference>
<dbReference type="GeneID" id="851065"/>
<dbReference type="KEGG" id="sce:YLR351C"/>
<dbReference type="AGR" id="SGD:S000004343"/>
<dbReference type="SGD" id="S000004343">
    <property type="gene designation" value="NIT3"/>
</dbReference>
<dbReference type="VEuPathDB" id="FungiDB:YLR351C"/>
<dbReference type="eggNOG" id="KOG0806">
    <property type="taxonomic scope" value="Eukaryota"/>
</dbReference>
<dbReference type="GeneTree" id="ENSGT00550000074838"/>
<dbReference type="HOGENOM" id="CLU_030130_1_0_1"/>
<dbReference type="InParanoid" id="P49954"/>
<dbReference type="OMA" id="MQSKPYA"/>
<dbReference type="OrthoDB" id="10250282at2759"/>
<dbReference type="BioCyc" id="YEAST:YLR351C-MONOMER"/>
<dbReference type="Reactome" id="R-SCE-6798695">
    <property type="pathway name" value="Neutrophil degranulation"/>
</dbReference>
<dbReference type="BioGRID-ORCS" id="851065">
    <property type="hits" value="0 hits in 10 CRISPR screens"/>
</dbReference>
<dbReference type="EvolutionaryTrace" id="P49954"/>
<dbReference type="PRO" id="PR:P49954"/>
<dbReference type="Proteomes" id="UP000002311">
    <property type="component" value="Chromosome XII"/>
</dbReference>
<dbReference type="RNAct" id="P49954">
    <property type="molecule type" value="protein"/>
</dbReference>
<dbReference type="GO" id="GO:0005737">
    <property type="term" value="C:cytoplasm"/>
    <property type="evidence" value="ECO:0007005"/>
    <property type="project" value="SGD"/>
</dbReference>
<dbReference type="GO" id="GO:0005739">
    <property type="term" value="C:mitochondrion"/>
    <property type="evidence" value="ECO:0007005"/>
    <property type="project" value="SGD"/>
</dbReference>
<dbReference type="GO" id="GO:0016811">
    <property type="term" value="F:hydrolase activity, acting on carbon-nitrogen (but not peptide) bonds, in linear amides"/>
    <property type="evidence" value="ECO:0000314"/>
    <property type="project" value="SGD"/>
</dbReference>
<dbReference type="GO" id="GO:0050152">
    <property type="term" value="F:omega-amidase activity"/>
    <property type="evidence" value="ECO:0000318"/>
    <property type="project" value="GO_Central"/>
</dbReference>
<dbReference type="GO" id="GO:0043605">
    <property type="term" value="P:amide catabolic process"/>
    <property type="evidence" value="ECO:0000314"/>
    <property type="project" value="SGD"/>
</dbReference>
<dbReference type="GO" id="GO:0006528">
    <property type="term" value="P:asparagine metabolic process"/>
    <property type="evidence" value="ECO:0000318"/>
    <property type="project" value="GO_Central"/>
</dbReference>
<dbReference type="GO" id="GO:0006541">
    <property type="term" value="P:glutamine metabolic process"/>
    <property type="evidence" value="ECO:0000318"/>
    <property type="project" value="GO_Central"/>
</dbReference>
<dbReference type="GO" id="GO:0006107">
    <property type="term" value="P:oxaloacetate metabolic process"/>
    <property type="evidence" value="ECO:0000318"/>
    <property type="project" value="GO_Central"/>
</dbReference>
<dbReference type="CDD" id="cd07572">
    <property type="entry name" value="nit"/>
    <property type="match status" value="1"/>
</dbReference>
<dbReference type="FunFam" id="3.60.110.10:FF:000021">
    <property type="entry name" value="Nit3p"/>
    <property type="match status" value="1"/>
</dbReference>
<dbReference type="Gene3D" id="3.60.110.10">
    <property type="entry name" value="Carbon-nitrogen hydrolase"/>
    <property type="match status" value="1"/>
</dbReference>
<dbReference type="InterPro" id="IPR003010">
    <property type="entry name" value="C-N_Hydrolase"/>
</dbReference>
<dbReference type="InterPro" id="IPR036526">
    <property type="entry name" value="C-N_Hydrolase_sf"/>
</dbReference>
<dbReference type="InterPro" id="IPR045254">
    <property type="entry name" value="Nit1/2_C-N_Hydrolase"/>
</dbReference>
<dbReference type="InterPro" id="IPR001110">
    <property type="entry name" value="UPF0012_CS"/>
</dbReference>
<dbReference type="PANTHER" id="PTHR23088">
    <property type="entry name" value="NITRILASE-RELATED"/>
    <property type="match status" value="1"/>
</dbReference>
<dbReference type="PANTHER" id="PTHR23088:SF30">
    <property type="entry name" value="OMEGA-AMIDASE NIT2"/>
    <property type="match status" value="1"/>
</dbReference>
<dbReference type="Pfam" id="PF00795">
    <property type="entry name" value="CN_hydrolase"/>
    <property type="match status" value="1"/>
</dbReference>
<dbReference type="SUPFAM" id="SSF56317">
    <property type="entry name" value="Carbon-nitrogen hydrolase"/>
    <property type="match status" value="1"/>
</dbReference>
<dbReference type="PROSITE" id="PS50263">
    <property type="entry name" value="CN_HYDROLASE"/>
    <property type="match status" value="1"/>
</dbReference>
<dbReference type="PROSITE" id="PS01227">
    <property type="entry name" value="UPF0012"/>
    <property type="match status" value="1"/>
</dbReference>
<keyword id="KW-0002">3D-structure</keyword>
<keyword id="KW-0378">Hydrolase</keyword>
<keyword id="KW-0597">Phosphoprotein</keyword>
<keyword id="KW-1185">Reference proteome</keyword>
<accession>P49954</accession>
<accession>D6VYY9</accession>
<accession>Q71SP9</accession>
<evidence type="ECO:0000255" key="1">
    <source>
        <dbReference type="PROSITE-ProRule" id="PRU00054"/>
    </source>
</evidence>
<evidence type="ECO:0000269" key="2">
    <source>
    </source>
</evidence>
<evidence type="ECO:0000269" key="3">
    <source>
    </source>
</evidence>
<evidence type="ECO:0000269" key="4">
    <source>
    </source>
</evidence>
<evidence type="ECO:0000303" key="5">
    <source>
    </source>
</evidence>
<evidence type="ECO:0000305" key="6"/>
<evidence type="ECO:0007744" key="7">
    <source>
    </source>
</evidence>
<evidence type="ECO:0007829" key="8">
    <source>
        <dbReference type="PDB" id="1F89"/>
    </source>
</evidence>
<name>NIT3_YEAST</name>
<proteinExistence type="evidence at protein level"/>
<reference key="1">
    <citation type="journal article" date="2000" name="Curr. Biol.">
        <title>Crystal structure of the worm NitFhit Rosetta stone protein reveals a Nit tetramer binding two Fhit dimers.</title>
        <authorList>
            <person name="Pace H.C."/>
            <person name="Hodawadekar S.C."/>
            <person name="Draganescu A."/>
            <person name="Huang J."/>
            <person name="Bieganowski P."/>
            <person name="Pekarsky Y."/>
            <person name="Croce C.M."/>
            <person name="Brenner C."/>
        </authorList>
    </citation>
    <scope>NUCLEOTIDE SEQUENCE [GENOMIC DNA]</scope>
</reference>
<reference key="2">
    <citation type="journal article" date="1997" name="Nature">
        <title>The nucleotide sequence of Saccharomyces cerevisiae chromosome XII.</title>
        <authorList>
            <person name="Johnston M."/>
            <person name="Hillier L.W."/>
            <person name="Riles L."/>
            <person name="Albermann K."/>
            <person name="Andre B."/>
            <person name="Ansorge W."/>
            <person name="Benes V."/>
            <person name="Brueckner M."/>
            <person name="Delius H."/>
            <person name="Dubois E."/>
            <person name="Duesterhoeft A."/>
            <person name="Entian K.-D."/>
            <person name="Floeth M."/>
            <person name="Goffeau A."/>
            <person name="Hebling U."/>
            <person name="Heumann K."/>
            <person name="Heuss-Neitzel D."/>
            <person name="Hilbert H."/>
            <person name="Hilger F."/>
            <person name="Kleine K."/>
            <person name="Koetter P."/>
            <person name="Louis E.J."/>
            <person name="Messenguy F."/>
            <person name="Mewes H.-W."/>
            <person name="Miosga T."/>
            <person name="Moestl D."/>
            <person name="Mueller-Auer S."/>
            <person name="Nentwich U."/>
            <person name="Obermaier B."/>
            <person name="Piravandi E."/>
            <person name="Pohl T.M."/>
            <person name="Portetelle D."/>
            <person name="Purnelle B."/>
            <person name="Rechmann S."/>
            <person name="Rieger M."/>
            <person name="Rinke M."/>
            <person name="Rose M."/>
            <person name="Scharfe M."/>
            <person name="Scherens B."/>
            <person name="Scholler P."/>
            <person name="Schwager C."/>
            <person name="Schwarz S."/>
            <person name="Underwood A.P."/>
            <person name="Urrestarazu L.A."/>
            <person name="Vandenbol M."/>
            <person name="Verhasselt P."/>
            <person name="Vierendeels F."/>
            <person name="Voet M."/>
            <person name="Volckaert G."/>
            <person name="Voss H."/>
            <person name="Wambutt R."/>
            <person name="Wedler E."/>
            <person name="Wedler H."/>
            <person name="Zimmermann F.K."/>
            <person name="Zollner A."/>
            <person name="Hani J."/>
            <person name="Hoheisel J.D."/>
        </authorList>
    </citation>
    <scope>NUCLEOTIDE SEQUENCE [LARGE SCALE GENOMIC DNA]</scope>
    <source>
        <strain>ATCC 204508 / S288c</strain>
    </source>
</reference>
<reference key="3">
    <citation type="journal article" date="2014" name="G3 (Bethesda)">
        <title>The reference genome sequence of Saccharomyces cerevisiae: Then and now.</title>
        <authorList>
            <person name="Engel S.R."/>
            <person name="Dietrich F.S."/>
            <person name="Fisk D.G."/>
            <person name="Binkley G."/>
            <person name="Balakrishnan R."/>
            <person name="Costanzo M.C."/>
            <person name="Dwight S.S."/>
            <person name="Hitz B.C."/>
            <person name="Karra K."/>
            <person name="Nash R.S."/>
            <person name="Weng S."/>
            <person name="Wong E.D."/>
            <person name="Lloyd P."/>
            <person name="Skrzypek M.S."/>
            <person name="Miyasato S.R."/>
            <person name="Simison M."/>
            <person name="Cherry J.M."/>
        </authorList>
    </citation>
    <scope>GENOME REANNOTATION</scope>
    <source>
        <strain>ATCC 204508 / S288c</strain>
    </source>
</reference>
<reference key="4">
    <citation type="journal article" date="2003" name="Nature">
        <title>Global analysis of protein expression in yeast.</title>
        <authorList>
            <person name="Ghaemmaghami S."/>
            <person name="Huh W.-K."/>
            <person name="Bower K."/>
            <person name="Howson R.W."/>
            <person name="Belle A."/>
            <person name="Dephoure N."/>
            <person name="O'Shea E.K."/>
            <person name="Weissman J.S."/>
        </authorList>
    </citation>
    <scope>LEVEL OF PROTEIN EXPRESSION [LARGE SCALE ANALYSIS]</scope>
</reference>
<reference key="5">
    <citation type="journal article" date="2008" name="Mol. Cell. Proteomics">
        <title>A multidimensional chromatography technology for in-depth phosphoproteome analysis.</title>
        <authorList>
            <person name="Albuquerque C.P."/>
            <person name="Smolka M.B."/>
            <person name="Payne S.H."/>
            <person name="Bafna V."/>
            <person name="Eng J."/>
            <person name="Zhou H."/>
        </authorList>
    </citation>
    <scope>PHOSPHORYLATION [LARGE SCALE ANALYSIS] AT THR-34</scope>
    <scope>IDENTIFICATION BY MASS SPECTROMETRY [LARGE SCALE ANALYSIS]</scope>
</reference>
<reference key="6">
    <citation type="journal article" date="2017" name="Proc. Natl. Acad. Sci. U.S.A.">
        <title>Nit1 is a metabolite repair enzyme that hydrolyzes deaminated glutathione.</title>
        <authorList>
            <person name="Peracchi A."/>
            <person name="Veiga-da-Cunha M."/>
            <person name="Kuhara T."/>
            <person name="Ellens K.W."/>
            <person name="Paczia N."/>
            <person name="Stroobant V."/>
            <person name="Seliga A.K."/>
            <person name="Marlaire S."/>
            <person name="Jaisson S."/>
            <person name="Bommer G.T."/>
            <person name="Sun J."/>
            <person name="Huebner K."/>
            <person name="Linster C.L."/>
            <person name="Cooper A.J.L."/>
            <person name="Van Schaftingen E."/>
        </authorList>
    </citation>
    <scope>FUNCTION</scope>
    <scope>CATALYTIC ACTIVITY</scope>
    <scope>BIOPHYSICOCHEMICAL PROPERTIES</scope>
</reference>
<reference key="7">
    <citation type="journal article" date="2003" name="Proteins">
        <title>Crystal structure of a putative CN hydrolase from yeast.</title>
        <authorList>
            <person name="Kumaran D."/>
            <person name="Eswaramoorthy S."/>
            <person name="Gerchman S.E."/>
            <person name="Kycia H."/>
            <person name="Studier F.W."/>
            <person name="Swaminathan S."/>
        </authorList>
    </citation>
    <scope>X-RAY CRYSTALLOGRAPHY (2.4 ANGSTROMS)</scope>
    <scope>SUBUNIT</scope>
</reference>
<comment type="function">
    <text evidence="4">Possesses omega-amidase activity (PubMed:28373563). The role of omega-amidase is to remove potentially toxic intermediates by converting 2-oxoglutaramate and 2-oxosuccinamate to biologically useful 2-oxoglutarate and oxaloacetate, respectively.</text>
</comment>
<comment type="catalytic activity">
    <reaction evidence="4">
        <text>a monoamide of a dicarboxylate + H2O = a dicarboxylate + NH4(+)</text>
        <dbReference type="Rhea" id="RHEA:11716"/>
        <dbReference type="ChEBI" id="CHEBI:15377"/>
        <dbReference type="ChEBI" id="CHEBI:28938"/>
        <dbReference type="ChEBI" id="CHEBI:28965"/>
        <dbReference type="ChEBI" id="CHEBI:77450"/>
        <dbReference type="EC" id="3.5.1.3"/>
    </reaction>
</comment>
<comment type="biophysicochemical properties">
    <kinetics>
        <KM evidence="4">1.6 mM for 2-oxoglutaramate (at pH 8.5)</KM>
        <Vmax evidence="4">40.2 umol/min/mg enzyme with 2-oxoglutaramate as substrate (at pH 8.5)</Vmax>
        <text evidence="4">kcat is 23.5 sec(-1) with 2-oxoglutaramate as substrate.</text>
    </kinetics>
</comment>
<comment type="subunit">
    <text evidence="2">Homodimer.</text>
</comment>
<comment type="miscellaneous">
    <text evidence="3">Present with 4510 molecules/cell in log phase SD medium.</text>
</comment>
<comment type="similarity">
    <text evidence="6">Belongs to the carbon-nitrogen hydrolase superfamily. NIT1/NIT2 family.</text>
</comment>
<organism>
    <name type="scientific">Saccharomyces cerevisiae (strain ATCC 204508 / S288c)</name>
    <name type="common">Baker's yeast</name>
    <dbReference type="NCBI Taxonomy" id="559292"/>
    <lineage>
        <taxon>Eukaryota</taxon>
        <taxon>Fungi</taxon>
        <taxon>Dikarya</taxon>
        <taxon>Ascomycota</taxon>
        <taxon>Saccharomycotina</taxon>
        <taxon>Saccharomycetes</taxon>
        <taxon>Saccharomycetales</taxon>
        <taxon>Saccharomycetaceae</taxon>
        <taxon>Saccharomyces</taxon>
    </lineage>
</organism>
<sequence length="291" mass="32549">MSASKILSQKIKVALVQLSGSSPDKMANLQRAATFIERAMKEQPDTKLVVLPECFNSPYSTDQFRKYSEVINPKEPSTSVQFLSNLANKFKIILVGGTIPELDPKTDKIYNTSIIFNEDGKLIDKHRKVHLFDVDIPNGISFHESETLSPGEKSTTIDTKYGKFGVGICYDMRFPELAMLSARKGAFAMIYPSAFNTVTGPLHWHLLARSRAVDNQVYVMLCSPARNLQSSYHAYGHSIVVDPRGKIVAEAGEGEEIIYAELDPEVIESFRQAVPLTKQRRFDVYSDVNAH</sequence>
<feature type="chain" id="PRO_0000213256" description="Omega-amidase NIT3">
    <location>
        <begin position="1"/>
        <end position="291"/>
    </location>
</feature>
<feature type="domain" description="CN hydrolase" evidence="1">
    <location>
        <begin position="11"/>
        <end position="264"/>
    </location>
</feature>
<feature type="active site" description="Proton acceptor" evidence="1">
    <location>
        <position position="53"/>
    </location>
</feature>
<feature type="active site" description="Proton donor" evidence="1">
    <location>
        <position position="128"/>
    </location>
</feature>
<feature type="active site" description="Nucleophile" evidence="1">
    <location>
        <position position="169"/>
    </location>
</feature>
<feature type="modified residue" description="Phosphothreonine" evidence="7">
    <location>
        <position position="34"/>
    </location>
</feature>
<feature type="strand" evidence="8">
    <location>
        <begin position="4"/>
        <end position="9"/>
    </location>
</feature>
<feature type="strand" evidence="8">
    <location>
        <begin position="11"/>
        <end position="17"/>
    </location>
</feature>
<feature type="helix" evidence="8">
    <location>
        <begin position="25"/>
        <end position="42"/>
    </location>
</feature>
<feature type="strand" evidence="8">
    <location>
        <begin position="46"/>
        <end position="50"/>
    </location>
</feature>
<feature type="turn" evidence="8">
    <location>
        <begin position="53"/>
        <end position="56"/>
    </location>
</feature>
<feature type="helix" evidence="8">
    <location>
        <begin position="61"/>
        <end position="67"/>
    </location>
</feature>
<feature type="strand" evidence="8">
    <location>
        <begin position="73"/>
        <end position="75"/>
    </location>
</feature>
<feature type="helix" evidence="8">
    <location>
        <begin position="78"/>
        <end position="89"/>
    </location>
</feature>
<feature type="strand" evidence="8">
    <location>
        <begin position="93"/>
        <end position="95"/>
    </location>
</feature>
<feature type="strand" evidence="8">
    <location>
        <begin position="99"/>
        <end position="102"/>
    </location>
</feature>
<feature type="turn" evidence="8">
    <location>
        <begin position="104"/>
        <end position="106"/>
    </location>
</feature>
<feature type="strand" evidence="8">
    <location>
        <begin position="109"/>
        <end position="116"/>
    </location>
</feature>
<feature type="strand" evidence="8">
    <location>
        <begin position="122"/>
        <end position="127"/>
    </location>
</feature>
<feature type="helix" evidence="8">
    <location>
        <begin position="143"/>
        <end position="146"/>
    </location>
</feature>
<feature type="strand" evidence="8">
    <location>
        <begin position="155"/>
        <end position="159"/>
    </location>
</feature>
<feature type="strand" evidence="8">
    <location>
        <begin position="162"/>
        <end position="166"/>
    </location>
</feature>
<feature type="helix" evidence="8">
    <location>
        <begin position="169"/>
        <end position="173"/>
    </location>
</feature>
<feature type="helix" evidence="8">
    <location>
        <begin position="175"/>
        <end position="183"/>
    </location>
</feature>
<feature type="strand" evidence="8">
    <location>
        <begin position="186"/>
        <end position="192"/>
    </location>
</feature>
<feature type="helix" evidence="8">
    <location>
        <begin position="199"/>
        <end position="215"/>
    </location>
</feature>
<feature type="strand" evidence="8">
    <location>
        <begin position="217"/>
        <end position="222"/>
    </location>
</feature>
<feature type="strand" evidence="8">
    <location>
        <begin position="230"/>
        <end position="232"/>
    </location>
</feature>
<feature type="strand" evidence="8">
    <location>
        <begin position="239"/>
        <end position="241"/>
    </location>
</feature>
<feature type="strand" evidence="8">
    <location>
        <begin position="247"/>
        <end position="250"/>
    </location>
</feature>
<feature type="strand" evidence="8">
    <location>
        <begin position="253"/>
        <end position="262"/>
    </location>
</feature>
<feature type="helix" evidence="8">
    <location>
        <begin position="264"/>
        <end position="273"/>
    </location>
</feature>
<gene>
    <name type="primary">NIT3</name>
    <name type="ordered locus">YLR351C</name>
    <name type="ORF">L9638.5</name>
</gene>
<protein>
    <recommendedName>
        <fullName evidence="5">Omega-amidase NIT3</fullName>
        <ecNumber evidence="4">3.5.1.3</ecNumber>
    </recommendedName>
    <alternativeName>
        <fullName>Nitrilase homolog 2</fullName>
    </alternativeName>
</protein>